<name>OXSM_BOVIN</name>
<feature type="transit peptide" description="Mitochondrion" evidence="4">
    <location>
        <begin position="1"/>
        <end position="28"/>
    </location>
</feature>
<feature type="chain" id="PRO_0000310304" description="3-oxoacyl-[acyl-carrier-protein] synthase, mitochondrial">
    <location>
        <begin position="29"/>
        <end position="460"/>
    </location>
</feature>
<feature type="domain" description="Ketosynthase family 3 (KS3)" evidence="5">
    <location>
        <begin position="42"/>
        <end position="459"/>
    </location>
</feature>
<feature type="active site" description="For beta-ketoacyl synthase activity" evidence="5">
    <location>
        <position position="210"/>
    </location>
</feature>
<feature type="active site" description="For beta-ketoacyl synthase activity" evidence="5">
    <location>
        <position position="349"/>
    </location>
</feature>
<feature type="active site" description="For beta-ketoacyl synthase activity" evidence="5">
    <location>
        <position position="386"/>
    </location>
</feature>
<feature type="modified residue" description="N6-acetyllysine; alternate" evidence="2">
    <location>
        <position position="110"/>
    </location>
</feature>
<feature type="modified residue" description="N6-succinyllysine; alternate" evidence="2">
    <location>
        <position position="110"/>
    </location>
</feature>
<feature type="modified residue" description="N6-succinyllysine" evidence="2">
    <location>
        <position position="114"/>
    </location>
</feature>
<feature type="modified residue" description="N6-acetyllysine; alternate" evidence="3">
    <location>
        <position position="175"/>
    </location>
</feature>
<feature type="modified residue" description="N6-succinyllysine; alternate" evidence="2">
    <location>
        <position position="175"/>
    </location>
</feature>
<organism>
    <name type="scientific">Bos taurus</name>
    <name type="common">Bovine</name>
    <dbReference type="NCBI Taxonomy" id="9913"/>
    <lineage>
        <taxon>Eukaryota</taxon>
        <taxon>Metazoa</taxon>
        <taxon>Chordata</taxon>
        <taxon>Craniata</taxon>
        <taxon>Vertebrata</taxon>
        <taxon>Euteleostomi</taxon>
        <taxon>Mammalia</taxon>
        <taxon>Eutheria</taxon>
        <taxon>Laurasiatheria</taxon>
        <taxon>Artiodactyla</taxon>
        <taxon>Ruminantia</taxon>
        <taxon>Pecora</taxon>
        <taxon>Bovidae</taxon>
        <taxon>Bovinae</taxon>
        <taxon>Bos</taxon>
    </lineage>
</organism>
<reference key="1">
    <citation type="submission" date="2006-08" db="EMBL/GenBank/DDBJ databases">
        <authorList>
            <consortium name="NIH - Mammalian Gene Collection (MGC) project"/>
        </authorList>
    </citation>
    <scope>NUCLEOTIDE SEQUENCE [LARGE SCALE MRNA]</scope>
    <source>
        <strain>Hereford</strain>
        <tissue>Thymus</tissue>
    </source>
</reference>
<protein>
    <recommendedName>
        <fullName evidence="6">3-oxoacyl-[acyl-carrier-protein] synthase, mitochondrial</fullName>
        <ecNumber evidence="3">2.3.1.41</ecNumber>
    </recommendedName>
    <alternativeName>
        <fullName>Beta-ketoacyl-ACP synthase</fullName>
    </alternativeName>
</protein>
<gene>
    <name type="primary">OXSM</name>
</gene>
<keyword id="KW-0007">Acetylation</keyword>
<keyword id="KW-0012">Acyltransferase</keyword>
<keyword id="KW-0275">Fatty acid biosynthesis</keyword>
<keyword id="KW-0276">Fatty acid metabolism</keyword>
<keyword id="KW-0444">Lipid biosynthesis</keyword>
<keyword id="KW-0443">Lipid metabolism</keyword>
<keyword id="KW-0496">Mitochondrion</keyword>
<keyword id="KW-1185">Reference proteome</keyword>
<keyword id="KW-0808">Transferase</keyword>
<keyword id="KW-0809">Transit peptide</keyword>
<accession>Q0VCA7</accession>
<sequence>MLSDGLQIFLRITKCHLIHARSCQRLVNERRFLATAPAPGLRRRVVITGIGLVTPLGVGTQLVWDRLVRGESGIVSLVGDEYQSIPCSVAAYVPRGCDEGQFNEQNFVPKSDTKSMSPPTVMAIAAAELALKDAGWHPQSEADQAATGVAIGMGMVPLEVISETALTFQTKGYSKVSPFFVPKILVNMASGQVSIRHKLKGPNHAVSTACTTGAHAVGDSFRFVAHGDADVMVAGGTDSCISPLSLAGFARARALSTNTDPKSACRPFHPQRDGFVMGEGAAVLVLEEHRHALRRGARVYAEIVGYGLSGDAGHITAPDPGGEGAFRCMAAAVKDAGIQPEEVSYINAHATSTPLGDAAENKAIKQLFKDHAHVLAVSSTKGATGHLLGTAGAAEAAFTALACYHRKLPPTLNLDCTEPHFDLNYVPLKAQEWKAENRRIALTNSFGFGGTNATLCIAGM</sequence>
<evidence type="ECO:0000250" key="1"/>
<evidence type="ECO:0000250" key="2">
    <source>
        <dbReference type="UniProtKB" id="Q9D404"/>
    </source>
</evidence>
<evidence type="ECO:0000250" key="3">
    <source>
        <dbReference type="UniProtKB" id="Q9NWU1"/>
    </source>
</evidence>
<evidence type="ECO:0000255" key="4"/>
<evidence type="ECO:0000255" key="5">
    <source>
        <dbReference type="PROSITE-ProRule" id="PRU01348"/>
    </source>
</evidence>
<evidence type="ECO:0000305" key="6"/>
<dbReference type="EC" id="2.3.1.41" evidence="3"/>
<dbReference type="EMBL" id="BC120268">
    <property type="protein sequence ID" value="AAI20269.1"/>
    <property type="molecule type" value="mRNA"/>
</dbReference>
<dbReference type="RefSeq" id="NP_001069092.1">
    <property type="nucleotide sequence ID" value="NM_001075624.2"/>
</dbReference>
<dbReference type="SMR" id="Q0VCA7"/>
<dbReference type="FunCoup" id="Q0VCA7">
    <property type="interactions" value="1450"/>
</dbReference>
<dbReference type="STRING" id="9913.ENSBTAP00000065523"/>
<dbReference type="PaxDb" id="9913-ENSBTAP00000009250"/>
<dbReference type="GeneID" id="513530"/>
<dbReference type="KEGG" id="bta:513530"/>
<dbReference type="CTD" id="54995"/>
<dbReference type="eggNOG" id="KOG1394">
    <property type="taxonomic scope" value="Eukaryota"/>
</dbReference>
<dbReference type="InParanoid" id="Q0VCA7"/>
<dbReference type="OrthoDB" id="5334845at2759"/>
<dbReference type="UniPathway" id="UPA00094"/>
<dbReference type="Proteomes" id="UP000009136">
    <property type="component" value="Unplaced"/>
</dbReference>
<dbReference type="GO" id="GO:0005739">
    <property type="term" value="C:mitochondrion"/>
    <property type="evidence" value="ECO:0000318"/>
    <property type="project" value="GO_Central"/>
</dbReference>
<dbReference type="GO" id="GO:0004315">
    <property type="term" value="F:3-oxoacyl-[acyl-carrier-protein] synthase activity"/>
    <property type="evidence" value="ECO:0000318"/>
    <property type="project" value="GO_Central"/>
</dbReference>
<dbReference type="GO" id="GO:0006633">
    <property type="term" value="P:fatty acid biosynthetic process"/>
    <property type="evidence" value="ECO:0000318"/>
    <property type="project" value="GO_Central"/>
</dbReference>
<dbReference type="CDD" id="cd00834">
    <property type="entry name" value="KAS_I_II"/>
    <property type="match status" value="1"/>
</dbReference>
<dbReference type="FunFam" id="3.40.47.10:FF:000015">
    <property type="entry name" value="3-oxoacyl-[acyl-carrier-protein] synthase, mitochondrial"/>
    <property type="match status" value="1"/>
</dbReference>
<dbReference type="FunFam" id="3.40.47.10:FF:000024">
    <property type="entry name" value="3-oxoacyl-[acyl-carrier-protein] synthase, mitochondrial"/>
    <property type="match status" value="1"/>
</dbReference>
<dbReference type="Gene3D" id="3.40.47.10">
    <property type="match status" value="2"/>
</dbReference>
<dbReference type="InterPro" id="IPR017568">
    <property type="entry name" value="3-oxoacyl-ACP_synth-2"/>
</dbReference>
<dbReference type="InterPro" id="IPR000794">
    <property type="entry name" value="Beta-ketoacyl_synthase"/>
</dbReference>
<dbReference type="InterPro" id="IPR018201">
    <property type="entry name" value="Ketoacyl_synth_AS"/>
</dbReference>
<dbReference type="InterPro" id="IPR014031">
    <property type="entry name" value="Ketoacyl_synth_C"/>
</dbReference>
<dbReference type="InterPro" id="IPR014030">
    <property type="entry name" value="Ketoacyl_synth_N"/>
</dbReference>
<dbReference type="InterPro" id="IPR020841">
    <property type="entry name" value="PKS_Beta-ketoAc_synthase_dom"/>
</dbReference>
<dbReference type="InterPro" id="IPR016039">
    <property type="entry name" value="Thiolase-like"/>
</dbReference>
<dbReference type="NCBIfam" id="TIGR03150">
    <property type="entry name" value="fabF"/>
    <property type="match status" value="1"/>
</dbReference>
<dbReference type="NCBIfam" id="NF005589">
    <property type="entry name" value="PRK07314.1"/>
    <property type="match status" value="1"/>
</dbReference>
<dbReference type="PANTHER" id="PTHR11712:SF336">
    <property type="entry name" value="3-OXOACYL-[ACYL-CARRIER-PROTEIN] SYNTHASE, MITOCHONDRIAL"/>
    <property type="match status" value="1"/>
</dbReference>
<dbReference type="PANTHER" id="PTHR11712">
    <property type="entry name" value="POLYKETIDE SYNTHASE-RELATED"/>
    <property type="match status" value="1"/>
</dbReference>
<dbReference type="Pfam" id="PF00109">
    <property type="entry name" value="ketoacyl-synt"/>
    <property type="match status" value="1"/>
</dbReference>
<dbReference type="Pfam" id="PF02801">
    <property type="entry name" value="Ketoacyl-synt_C"/>
    <property type="match status" value="1"/>
</dbReference>
<dbReference type="PIRSF" id="PIRSF000447">
    <property type="entry name" value="KAS_II"/>
    <property type="match status" value="1"/>
</dbReference>
<dbReference type="SMART" id="SM00825">
    <property type="entry name" value="PKS_KS"/>
    <property type="match status" value="1"/>
</dbReference>
<dbReference type="SUPFAM" id="SSF53901">
    <property type="entry name" value="Thiolase-like"/>
    <property type="match status" value="2"/>
</dbReference>
<dbReference type="PROSITE" id="PS00606">
    <property type="entry name" value="KS3_1"/>
    <property type="match status" value="1"/>
</dbReference>
<dbReference type="PROSITE" id="PS52004">
    <property type="entry name" value="KS3_2"/>
    <property type="match status" value="1"/>
</dbReference>
<proteinExistence type="evidence at transcript level"/>
<comment type="function">
    <text evidence="1">May play a role in the biosynthesis of lipoic acid as well as longer chain fatty acids required for optimal mitochondrial function.</text>
</comment>
<comment type="catalytic activity">
    <reaction evidence="3">
        <text>a fatty acyl-[ACP] + malonyl-[ACP] + H(+) = a 3-oxoacyl-[ACP] + holo-[ACP] + CO2</text>
        <dbReference type="Rhea" id="RHEA:22836"/>
        <dbReference type="Rhea" id="RHEA-COMP:9623"/>
        <dbReference type="Rhea" id="RHEA-COMP:9685"/>
        <dbReference type="Rhea" id="RHEA-COMP:9916"/>
        <dbReference type="Rhea" id="RHEA-COMP:14125"/>
        <dbReference type="ChEBI" id="CHEBI:15378"/>
        <dbReference type="ChEBI" id="CHEBI:16526"/>
        <dbReference type="ChEBI" id="CHEBI:64479"/>
        <dbReference type="ChEBI" id="CHEBI:78449"/>
        <dbReference type="ChEBI" id="CHEBI:78776"/>
        <dbReference type="ChEBI" id="CHEBI:138651"/>
        <dbReference type="EC" id="2.3.1.41"/>
    </reaction>
    <physiologicalReaction direction="left-to-right" evidence="3">
        <dbReference type="Rhea" id="RHEA:22837"/>
    </physiologicalReaction>
</comment>
<comment type="catalytic activity">
    <reaction evidence="3">
        <text>butanoyl-[ACP] + malonyl-[ACP] + H(+) = 3-oxohexanoyl-[ACP] + holo-[ACP] + CO2</text>
        <dbReference type="Rhea" id="RHEA:41820"/>
        <dbReference type="Rhea" id="RHEA-COMP:9623"/>
        <dbReference type="Rhea" id="RHEA-COMP:9628"/>
        <dbReference type="Rhea" id="RHEA-COMP:9629"/>
        <dbReference type="Rhea" id="RHEA-COMP:9685"/>
        <dbReference type="ChEBI" id="CHEBI:15378"/>
        <dbReference type="ChEBI" id="CHEBI:16526"/>
        <dbReference type="ChEBI" id="CHEBI:64479"/>
        <dbReference type="ChEBI" id="CHEBI:78449"/>
        <dbReference type="ChEBI" id="CHEBI:78454"/>
        <dbReference type="ChEBI" id="CHEBI:78456"/>
    </reaction>
    <physiologicalReaction direction="left-to-right" evidence="3">
        <dbReference type="Rhea" id="RHEA:41821"/>
    </physiologicalReaction>
</comment>
<comment type="catalytic activity">
    <reaction evidence="3">
        <text>hexanoyl-[ACP] + malonyl-[ACP] + H(+) = 3-oxooctanoyl-[ACP] + holo-[ACP] + CO2</text>
        <dbReference type="Rhea" id="RHEA:41836"/>
        <dbReference type="Rhea" id="RHEA-COMP:9623"/>
        <dbReference type="Rhea" id="RHEA-COMP:9632"/>
        <dbReference type="Rhea" id="RHEA-COMP:9633"/>
        <dbReference type="Rhea" id="RHEA-COMP:9685"/>
        <dbReference type="ChEBI" id="CHEBI:15378"/>
        <dbReference type="ChEBI" id="CHEBI:16526"/>
        <dbReference type="ChEBI" id="CHEBI:64479"/>
        <dbReference type="ChEBI" id="CHEBI:78449"/>
        <dbReference type="ChEBI" id="CHEBI:78459"/>
        <dbReference type="ChEBI" id="CHEBI:78460"/>
    </reaction>
    <physiologicalReaction direction="left-to-right" evidence="3">
        <dbReference type="Rhea" id="RHEA:41837"/>
    </physiologicalReaction>
</comment>
<comment type="catalytic activity">
    <reaction evidence="3">
        <text>octanoyl-[ACP] + malonyl-[ACP] + H(+) = 3-oxodecanoyl-[ACP] + holo-[ACP] + CO2</text>
        <dbReference type="Rhea" id="RHEA:41852"/>
        <dbReference type="Rhea" id="RHEA-COMP:9623"/>
        <dbReference type="Rhea" id="RHEA-COMP:9636"/>
        <dbReference type="Rhea" id="RHEA-COMP:9637"/>
        <dbReference type="Rhea" id="RHEA-COMP:9685"/>
        <dbReference type="ChEBI" id="CHEBI:15378"/>
        <dbReference type="ChEBI" id="CHEBI:16526"/>
        <dbReference type="ChEBI" id="CHEBI:64479"/>
        <dbReference type="ChEBI" id="CHEBI:78449"/>
        <dbReference type="ChEBI" id="CHEBI:78463"/>
        <dbReference type="ChEBI" id="CHEBI:78464"/>
    </reaction>
    <physiologicalReaction direction="left-to-right" evidence="3">
        <dbReference type="Rhea" id="RHEA:41853"/>
    </physiologicalReaction>
</comment>
<comment type="catalytic activity">
    <reaction evidence="3">
        <text>decanoyl-[ACP] + malonyl-[ACP] + H(+) = 3-oxododecanoyl-[ACP] + holo-[ACP] + CO2</text>
        <dbReference type="Rhea" id="RHEA:41868"/>
        <dbReference type="Rhea" id="RHEA-COMP:9623"/>
        <dbReference type="Rhea" id="RHEA-COMP:9640"/>
        <dbReference type="Rhea" id="RHEA-COMP:9641"/>
        <dbReference type="Rhea" id="RHEA-COMP:9685"/>
        <dbReference type="ChEBI" id="CHEBI:15378"/>
        <dbReference type="ChEBI" id="CHEBI:16526"/>
        <dbReference type="ChEBI" id="CHEBI:64479"/>
        <dbReference type="ChEBI" id="CHEBI:78449"/>
        <dbReference type="ChEBI" id="CHEBI:78468"/>
        <dbReference type="ChEBI" id="CHEBI:78469"/>
    </reaction>
    <physiologicalReaction direction="left-to-right" evidence="3">
        <dbReference type="Rhea" id="RHEA:41869"/>
    </physiologicalReaction>
</comment>
<comment type="catalytic activity">
    <reaction evidence="3">
        <text>dodecanoyl-[ACP] + malonyl-[ACP] + H(+) = 3-oxotetradecanoyl-[ACP] + holo-[ACP] + CO2</text>
        <dbReference type="Rhea" id="RHEA:41884"/>
        <dbReference type="Rhea" id="RHEA-COMP:9623"/>
        <dbReference type="Rhea" id="RHEA-COMP:9644"/>
        <dbReference type="Rhea" id="RHEA-COMP:9645"/>
        <dbReference type="Rhea" id="RHEA-COMP:9685"/>
        <dbReference type="ChEBI" id="CHEBI:15378"/>
        <dbReference type="ChEBI" id="CHEBI:16526"/>
        <dbReference type="ChEBI" id="CHEBI:64479"/>
        <dbReference type="ChEBI" id="CHEBI:65264"/>
        <dbReference type="ChEBI" id="CHEBI:78449"/>
        <dbReference type="ChEBI" id="CHEBI:78473"/>
    </reaction>
    <physiologicalReaction direction="left-to-right" evidence="3">
        <dbReference type="Rhea" id="RHEA:41885"/>
    </physiologicalReaction>
</comment>
<comment type="catalytic activity">
    <reaction evidence="3">
        <text>tetradecanoyl-[ACP] + malonyl-[ACP] + H(+) = 3-oxohexadecanoyl-[ACP] + holo-[ACP] + CO2</text>
        <dbReference type="Rhea" id="RHEA:41900"/>
        <dbReference type="Rhea" id="RHEA-COMP:9623"/>
        <dbReference type="Rhea" id="RHEA-COMP:9648"/>
        <dbReference type="Rhea" id="RHEA-COMP:9649"/>
        <dbReference type="Rhea" id="RHEA-COMP:9685"/>
        <dbReference type="ChEBI" id="CHEBI:15378"/>
        <dbReference type="ChEBI" id="CHEBI:16526"/>
        <dbReference type="ChEBI" id="CHEBI:64479"/>
        <dbReference type="ChEBI" id="CHEBI:78449"/>
        <dbReference type="ChEBI" id="CHEBI:78477"/>
        <dbReference type="ChEBI" id="CHEBI:78478"/>
    </reaction>
    <physiologicalReaction direction="left-to-right" evidence="3">
        <dbReference type="Rhea" id="RHEA:41901"/>
    </physiologicalReaction>
</comment>
<comment type="activity regulation">
    <text evidence="1">Inhibited by cerulenin.</text>
</comment>
<comment type="pathway">
    <text>Lipid metabolism; fatty acid biosynthesis.</text>
</comment>
<comment type="subcellular location">
    <subcellularLocation>
        <location evidence="1">Mitochondrion</location>
    </subcellularLocation>
</comment>
<comment type="similarity">
    <text evidence="6">Belongs to the thiolase-like superfamily. Beta-ketoacyl-ACP synthases family.</text>
</comment>